<name>TFR1_CANLF</name>
<organism>
    <name type="scientific">Canis lupus familiaris</name>
    <name type="common">Dog</name>
    <name type="synonym">Canis familiaris</name>
    <dbReference type="NCBI Taxonomy" id="9615"/>
    <lineage>
        <taxon>Eukaryota</taxon>
        <taxon>Metazoa</taxon>
        <taxon>Chordata</taxon>
        <taxon>Craniata</taxon>
        <taxon>Vertebrata</taxon>
        <taxon>Euteleostomi</taxon>
        <taxon>Mammalia</taxon>
        <taxon>Eutheria</taxon>
        <taxon>Laurasiatheria</taxon>
        <taxon>Carnivora</taxon>
        <taxon>Caniformia</taxon>
        <taxon>Canidae</taxon>
        <taxon>Canis</taxon>
    </lineage>
</organism>
<protein>
    <recommendedName>
        <fullName>Transferrin receptor protein 1</fullName>
        <shortName>TR</shortName>
        <shortName>TfR</shortName>
        <shortName>TfR1</shortName>
        <shortName>Trfr</shortName>
    </recommendedName>
    <cdAntigenName>CD71</cdAntigenName>
</protein>
<accession>Q9GLD3</accession>
<proteinExistence type="evidence at protein level"/>
<feature type="chain" id="PRO_0000174129" description="Transferrin receptor protein 1">
    <location>
        <begin position="1"/>
        <end position="770"/>
    </location>
</feature>
<feature type="topological domain" description="Cytoplasmic" evidence="4">
    <location>
        <begin position="1"/>
        <end position="70"/>
    </location>
</feature>
<feature type="transmembrane region" description="Helical; Signal-anchor for type II membrane protein" evidence="4">
    <location>
        <begin position="71"/>
        <end position="90"/>
    </location>
</feature>
<feature type="topological domain" description="Extracellular" evidence="4">
    <location>
        <begin position="91"/>
        <end position="770"/>
    </location>
</feature>
<feature type="domain" description="PA">
    <location>
        <begin position="233"/>
        <end position="323"/>
    </location>
</feature>
<feature type="region of interest" description="Mediates interaction with SH3BP4" evidence="1">
    <location>
        <begin position="1"/>
        <end position="70"/>
    </location>
</feature>
<feature type="region of interest" description="Disordered" evidence="5">
    <location>
        <begin position="102"/>
        <end position="122"/>
    </location>
</feature>
<feature type="region of interest" description="Ligand-binding" evidence="1">
    <location>
        <begin position="579"/>
        <end position="770"/>
    </location>
</feature>
<feature type="short sequence motif" description="Endocytosis signal">
    <location>
        <begin position="20"/>
        <end position="23"/>
    </location>
</feature>
<feature type="short sequence motif" description="Stop-transfer sequence">
    <location>
        <begin position="61"/>
        <end position="64"/>
    </location>
</feature>
<feature type="short sequence motif" description="Cell attachment site" evidence="4">
    <location>
        <begin position="656"/>
        <end position="658"/>
    </location>
</feature>
<feature type="modified residue" description="Phosphoserine" evidence="2">
    <location>
        <position position="10"/>
    </location>
</feature>
<feature type="modified residue" description="Phosphoserine" evidence="3">
    <location>
        <position position="19"/>
    </location>
</feature>
<feature type="modified residue" description="Phosphotyrosine" evidence="2">
    <location>
        <position position="20"/>
    </location>
</feature>
<feature type="modified residue" description="Phosphothreonine" evidence="2">
    <location>
        <position position="21"/>
    </location>
</feature>
<feature type="modified residue" description="Phosphoserine" evidence="2">
    <location>
        <position position="24"/>
    </location>
</feature>
<feature type="lipid moiety-binding region" description="S-palmitoyl cysteine" evidence="1">
    <location>
        <position position="65"/>
    </location>
</feature>
<feature type="lipid moiety-binding region" description="S-palmitoyl cysteine" evidence="1">
    <location>
        <position position="70"/>
    </location>
</feature>
<feature type="glycosylation site" description="O-linked (GalNAc...) threonine" evidence="1">
    <location>
        <position position="107"/>
    </location>
</feature>
<feature type="glycosylation site" description="N-linked (GlcNAc...) asparagine" evidence="2">
    <location>
        <position position="261"/>
    </location>
</feature>
<feature type="glycosylation site" description="N-linked (GlcNAc...) asparagine" evidence="2">
    <location>
        <position position="327"/>
    </location>
</feature>
<feature type="glycosylation site" description="N-linked (GlcNAc...) asparagine" evidence="1">
    <location>
        <position position="384"/>
    </location>
</feature>
<feature type="glycosylation site" description="N-linked (GlcNAc...) asparagine" evidence="4">
    <location>
        <position position="732"/>
    </location>
</feature>
<feature type="glycosylation site" description="N-linked (GlcNAc...) asparagine" evidence="2">
    <location>
        <position position="737"/>
    </location>
</feature>
<feature type="disulfide bond" description="Interchain" evidence="1">
    <location>
        <position position="92"/>
    </location>
</feature>
<feature type="disulfide bond" description="Interchain" evidence="1">
    <location>
        <position position="101"/>
    </location>
</feature>
<comment type="function">
    <text evidence="2 3">Cellular uptake of iron occurs via receptor-mediated endocytosis of ligand-occupied transferrin receptor into specialized endosomes (By similarity). Endosomal acidification leads to iron release. The apotransferrin-receptor complex is then recycled to the cell surface with a return to neutral pH and the concomitant loss of affinity of apotransferrin for its receptor. Transferrin receptor is necessary for development of erythrocytes and the nervous system (By similarity). Positively regulates T and B cell proliferation through iron uptake (By similarity). Acts as a lipid sensor that regulates mitochondrial fusion by regulating activation of the JNK pathway (By similarity). When dietary levels of stearate (C18:0) are low, promotes activation of the JNK pathway, resulting in HUWE1-mediated ubiquitination and subsequent degradation of the mitofusin MFN2 and inhibition of mitochondrial fusion (By similarity). When dietary levels of stearate (C18:0) are high, TFRC stearoylation inhibits activation of the JNK pathway and thus degradation of the mitofusin MFN2 (By similarity). Mediates uptake of NICOL1 into fibroblasts where it may regulate extracellular matrix production (By similarity).</text>
</comment>
<comment type="subunit">
    <text evidence="1 2">Homodimer; disulfide-linked. Binds one transferrin molecule per subunit. Interacts with SH3BP4 (By similarity). Interacts with STEAP3; facilitates TFRC endocytosis in erythroid precursor cells (By similarity).</text>
</comment>
<comment type="subcellular location">
    <subcellularLocation>
        <location evidence="2">Cell membrane</location>
        <topology evidence="2">Single-pass type II membrane protein</topology>
    </subcellularLocation>
    <subcellularLocation>
        <location evidence="2">Melanosome</location>
    </subcellularLocation>
</comment>
<comment type="domain">
    <text>The YTRF endocytosis motif engages the clathrin-mediated endocytic machinery through adapter protein-2.</text>
</comment>
<comment type="PTM">
    <text evidence="2">Stearoylated by ZDHHC6 which inhibits TFRC-mediated activation of the JNK pathway and promotes mitochondrial fragmentation (By similarity). Stearoylation does not affect iron uptake (By similarity).</text>
</comment>
<comment type="PTM">
    <text evidence="1">N- and O-glycosylated, phosphorylated and palmitoylated.</text>
</comment>
<comment type="miscellaneous">
    <text>Canine and feline parvoviruses bind human and feline transferrin receptors and use these receptors to enter and infect cells.</text>
</comment>
<comment type="similarity">
    <text evidence="6">Belongs to the peptidase M28 family. M28B subfamily.</text>
</comment>
<gene>
    <name type="primary">TFRC</name>
</gene>
<sequence>MMDQARSAFSTLFGGEPLSYTRFSLARQVDGDNSHVEMKLAADEEENVDNNMRGNHASVPKPKRCNGFICYGTIAVVLFFLIGFMIGYLGYCKRVEPKAGCERPTGTEALGTERTEPSETEEYFPETPSRLFWTDLKTMLSERLSNTDFTNTMRWLNENSYVPREAGSQKDESLALLIENRFREFQLSKSWRDEHFVEIQVKSSNAQNTVTIVDMESDLVYLAESPEGYVAYSKATTVTGRLVHVNFGTKKDFENLKSPVNGSLVIARAGKITFAEKVANAQSYNALGVLIYMDQARFPIVNARIPFFGHAHLGTGDPYTPGFPSFNHTQFPPSQSSGLPSIPVQTISRAAAEKLFENMEGDCPSAWEIDPSCRLETSSNKNVNLTVNNVLKEIRIFNVFGVIKGFEEPDRYVVIGAQRDAWGPGAAKSSVGTALLLELARIFSDMVLKGGFKPSRSIVFASWSAGDFGAIGATEWLEGYLSSLHLKAFTYINLDKAILGTSNFKVSASPLLYSLLEKTMKDVKHPITGQSLYRDSNWINKVEKLSLDNAAFPFLAYSGIPAVSFCFCEDTDYPYLGTTMDLYENLNQKIPQLNKMARGAAEVAGQLIMKLTYDLELNLNYEMYNDRILSFVRDMNQFRTDIKEMGLNLQWLYSARGDFFRATSRLTTDYKNAERTNRFVMREINDRIMKVEHNFLSPYVSPRDSPFRHIFWGSGSHTLPALVEHLKLRQKNKSAFNETLLRNQLALATWTIQGAANALSGDIWDIDNEF</sequence>
<keyword id="KW-1003">Cell membrane</keyword>
<keyword id="KW-1015">Disulfide bond</keyword>
<keyword id="KW-0254">Endocytosis</keyword>
<keyword id="KW-0325">Glycoprotein</keyword>
<keyword id="KW-0945">Host-virus interaction</keyword>
<keyword id="KW-0449">Lipoprotein</keyword>
<keyword id="KW-0472">Membrane</keyword>
<keyword id="KW-0564">Palmitate</keyword>
<keyword id="KW-0597">Phosphoprotein</keyword>
<keyword id="KW-0675">Receptor</keyword>
<keyword id="KW-1185">Reference proteome</keyword>
<keyword id="KW-0735">Signal-anchor</keyword>
<keyword id="KW-0812">Transmembrane</keyword>
<keyword id="KW-1133">Transmembrane helix</keyword>
<reference key="1">
    <citation type="journal article" date="2001" name="J. Virol.">
        <title>Canine and feline parvoviruses can use human or feline transferrin receptors to bind, enter, and infect cells.</title>
        <authorList>
            <person name="Parker J.S.L."/>
            <person name="Murphy W.J."/>
            <person name="Wang D."/>
            <person name="O'Brien S.J."/>
            <person name="Parrish C.R."/>
        </authorList>
    </citation>
    <scope>NUCLEOTIDE SEQUENCE [MRNA]</scope>
</reference>
<reference key="2">
    <citation type="journal article" date="2009" name="J. Virol.">
        <title>Early steps in cell infection by parvoviruses: host-specific differences in cell receptor binding but similar endosomal trafficking.</title>
        <authorList>
            <person name="Harbison C.E."/>
            <person name="Lyi S.M."/>
            <person name="Weichert W.S."/>
            <person name="Parrish C.R."/>
        </authorList>
    </citation>
    <scope>INTERACTION WITH CANINE PARVOVIRUS CAPSID PROTEINS</scope>
</reference>
<dbReference type="EMBL" id="AF297626">
    <property type="protein sequence ID" value="AAG24850.1"/>
    <property type="molecule type" value="mRNA"/>
</dbReference>
<dbReference type="RefSeq" id="NP_001003111.1">
    <property type="nucleotide sequence ID" value="NM_001003111.1"/>
</dbReference>
<dbReference type="SMR" id="Q9GLD3"/>
<dbReference type="FunCoup" id="Q9GLD3">
    <property type="interactions" value="473"/>
</dbReference>
<dbReference type="STRING" id="9615.ENSCAFP00000019067"/>
<dbReference type="MEROPS" id="M28.972"/>
<dbReference type="GlyCosmos" id="Q9GLD3">
    <property type="glycosylation" value="6 sites, No reported glycans"/>
</dbReference>
<dbReference type="SwissPalm" id="Q9GLD3"/>
<dbReference type="PaxDb" id="9612-ENSCAFP00000019067"/>
<dbReference type="GeneID" id="403703"/>
<dbReference type="KEGG" id="cfa:403703"/>
<dbReference type="CTD" id="7037"/>
<dbReference type="eggNOG" id="KOG2195">
    <property type="taxonomic scope" value="Eukaryota"/>
</dbReference>
<dbReference type="InParanoid" id="Q9GLD3"/>
<dbReference type="OrthoDB" id="5841748at2759"/>
<dbReference type="Proteomes" id="UP000002254">
    <property type="component" value="Unplaced"/>
</dbReference>
<dbReference type="Proteomes" id="UP000694429">
    <property type="component" value="Unplaced"/>
</dbReference>
<dbReference type="Proteomes" id="UP000694542">
    <property type="component" value="Unplaced"/>
</dbReference>
<dbReference type="Proteomes" id="UP000805418">
    <property type="component" value="Unplaced"/>
</dbReference>
<dbReference type="GO" id="GO:0009897">
    <property type="term" value="C:external side of plasma membrane"/>
    <property type="evidence" value="ECO:0000318"/>
    <property type="project" value="GO_Central"/>
</dbReference>
<dbReference type="GO" id="GO:0042470">
    <property type="term" value="C:melanosome"/>
    <property type="evidence" value="ECO:0007669"/>
    <property type="project" value="UniProtKB-SubCell"/>
</dbReference>
<dbReference type="GO" id="GO:0004998">
    <property type="term" value="F:transferrin receptor activity"/>
    <property type="evidence" value="ECO:0000250"/>
    <property type="project" value="UniProtKB"/>
</dbReference>
<dbReference type="GO" id="GO:0006879">
    <property type="term" value="P:intracellular iron ion homeostasis"/>
    <property type="evidence" value="ECO:0000318"/>
    <property type="project" value="GO_Central"/>
</dbReference>
<dbReference type="GO" id="GO:0006826">
    <property type="term" value="P:iron ion transport"/>
    <property type="evidence" value="ECO:0000318"/>
    <property type="project" value="GO_Central"/>
</dbReference>
<dbReference type="GO" id="GO:0030890">
    <property type="term" value="P:positive regulation of B cell proliferation"/>
    <property type="evidence" value="ECO:0000250"/>
    <property type="project" value="UniProtKB"/>
</dbReference>
<dbReference type="GO" id="GO:0045830">
    <property type="term" value="P:positive regulation of isotype switching"/>
    <property type="evidence" value="ECO:0000250"/>
    <property type="project" value="UniProtKB"/>
</dbReference>
<dbReference type="GO" id="GO:0042102">
    <property type="term" value="P:positive regulation of T cell proliferation"/>
    <property type="evidence" value="ECO:0000250"/>
    <property type="project" value="UniProtKB"/>
</dbReference>
<dbReference type="GO" id="GO:0031623">
    <property type="term" value="P:receptor internalization"/>
    <property type="evidence" value="ECO:0000250"/>
    <property type="project" value="UniProtKB"/>
</dbReference>
<dbReference type="GO" id="GO:0033572">
    <property type="term" value="P:transferrin transport"/>
    <property type="evidence" value="ECO:0000250"/>
    <property type="project" value="UniProtKB"/>
</dbReference>
<dbReference type="CDD" id="cd09848">
    <property type="entry name" value="M28_TfR"/>
    <property type="match status" value="1"/>
</dbReference>
<dbReference type="CDD" id="cd02128">
    <property type="entry name" value="PA_TfR"/>
    <property type="match status" value="1"/>
</dbReference>
<dbReference type="FunFam" id="1.20.930.40:FF:000002">
    <property type="entry name" value="Transferrin receptor protein 1"/>
    <property type="match status" value="1"/>
</dbReference>
<dbReference type="FunFam" id="3.40.630.10:FF:000045">
    <property type="entry name" value="Transferrin receptor protein 1"/>
    <property type="match status" value="1"/>
</dbReference>
<dbReference type="FunFam" id="3.50.30.30:FF:000010">
    <property type="entry name" value="Transferrin receptor protein 1"/>
    <property type="match status" value="1"/>
</dbReference>
<dbReference type="Gene3D" id="3.50.30.30">
    <property type="match status" value="1"/>
</dbReference>
<dbReference type="Gene3D" id="1.20.930.40">
    <property type="entry name" value="Transferrin receptor-like, dimerisation domain"/>
    <property type="match status" value="1"/>
</dbReference>
<dbReference type="Gene3D" id="3.40.630.10">
    <property type="entry name" value="Zn peptidases"/>
    <property type="match status" value="1"/>
</dbReference>
<dbReference type="InterPro" id="IPR046450">
    <property type="entry name" value="PA_dom_sf"/>
</dbReference>
<dbReference type="InterPro" id="IPR003137">
    <property type="entry name" value="PA_domain"/>
</dbReference>
<dbReference type="InterPro" id="IPR007484">
    <property type="entry name" value="Peptidase_M28"/>
</dbReference>
<dbReference type="InterPro" id="IPR039373">
    <property type="entry name" value="Peptidase_M28B"/>
</dbReference>
<dbReference type="InterPro" id="IPR007365">
    <property type="entry name" value="TFR-like_dimer_dom"/>
</dbReference>
<dbReference type="InterPro" id="IPR036757">
    <property type="entry name" value="TFR-like_dimer_dom_sf"/>
</dbReference>
<dbReference type="InterPro" id="IPR037324">
    <property type="entry name" value="TfR1/2_PA"/>
</dbReference>
<dbReference type="PANTHER" id="PTHR10404">
    <property type="entry name" value="N-ACETYLATED-ALPHA-LINKED ACIDIC DIPEPTIDASE"/>
    <property type="match status" value="1"/>
</dbReference>
<dbReference type="PANTHER" id="PTHR10404:SF26">
    <property type="entry name" value="TRANSFERRIN RECEPTOR PROTEIN 1"/>
    <property type="match status" value="1"/>
</dbReference>
<dbReference type="Pfam" id="PF02225">
    <property type="entry name" value="PA"/>
    <property type="match status" value="1"/>
</dbReference>
<dbReference type="Pfam" id="PF04389">
    <property type="entry name" value="Peptidase_M28"/>
    <property type="match status" value="1"/>
</dbReference>
<dbReference type="Pfam" id="PF04253">
    <property type="entry name" value="TFR_dimer"/>
    <property type="match status" value="1"/>
</dbReference>
<dbReference type="SUPFAM" id="SSF52025">
    <property type="entry name" value="PA domain"/>
    <property type="match status" value="1"/>
</dbReference>
<dbReference type="SUPFAM" id="SSF47672">
    <property type="entry name" value="Transferrin receptor-like dimerisation domain"/>
    <property type="match status" value="1"/>
</dbReference>
<dbReference type="SUPFAM" id="SSF53187">
    <property type="entry name" value="Zn-dependent exopeptidases"/>
    <property type="match status" value="1"/>
</dbReference>
<evidence type="ECO:0000250" key="1"/>
<evidence type="ECO:0000250" key="2">
    <source>
        <dbReference type="UniProtKB" id="P02786"/>
    </source>
</evidence>
<evidence type="ECO:0000250" key="3">
    <source>
        <dbReference type="UniProtKB" id="Q62351"/>
    </source>
</evidence>
<evidence type="ECO:0000255" key="4"/>
<evidence type="ECO:0000256" key="5">
    <source>
        <dbReference type="SAM" id="MobiDB-lite"/>
    </source>
</evidence>
<evidence type="ECO:0000305" key="6"/>